<comment type="function">
    <text evidence="1">Could act as a modulator of glutaredoxin biological activity (By similarity). May play a role in cytoskeleton organization (By similarity).</text>
</comment>
<comment type="subunit">
    <text evidence="1">Interacts with MYO1C (via its IQ motifs); the interaction is dependent on calcium and takes place at membrane ruffles.</text>
</comment>
<comment type="subcellular location">
    <subcellularLocation>
        <location evidence="7">Cytoplasm</location>
        <location evidence="7">Cytosol</location>
    </subcellularLocation>
    <subcellularLocation>
        <location evidence="1">Cell projection</location>
        <location evidence="1">Ruffle membrane</location>
    </subcellularLocation>
    <subcellularLocation>
        <location evidence="1">Nucleus</location>
    </subcellularLocation>
</comment>
<comment type="tissue specificity">
    <text evidence="4">Expressed in heart, liver, lung, kidney, spleen, thymus, ovarian follicles, skeletal muscle, brain, lymph node and mammary epithelial and stromal cells (at protein level).</text>
</comment>
<comment type="PTM">
    <text evidence="1">May be glycosylated.</text>
</comment>
<comment type="similarity">
    <text evidence="6">Belongs to the SH3BGR family.</text>
</comment>
<dbReference type="EMBL" id="BC167002">
    <property type="protein sequence ID" value="AAI67002.1"/>
    <property type="molecule type" value="mRNA"/>
</dbReference>
<dbReference type="EMBL" id="CH473968">
    <property type="protein sequence ID" value="EDL80707.1"/>
    <property type="molecule type" value="Genomic_DNA"/>
</dbReference>
<dbReference type="RefSeq" id="NP_001100158.1">
    <property type="nucleotide sequence ID" value="NM_001106688.1"/>
</dbReference>
<dbReference type="SMR" id="B2RZ27"/>
<dbReference type="FunCoup" id="B2RZ27">
    <property type="interactions" value="1132"/>
</dbReference>
<dbReference type="STRING" id="10116.ENSRNOP00000021734"/>
<dbReference type="GlyGen" id="B2RZ27">
    <property type="glycosylation" value="1 site"/>
</dbReference>
<dbReference type="iPTMnet" id="B2RZ27"/>
<dbReference type="PhosphoSitePlus" id="B2RZ27"/>
<dbReference type="jPOST" id="B2RZ27"/>
<dbReference type="PaxDb" id="10116-ENSRNOP00000021734"/>
<dbReference type="PeptideAtlas" id="B2RZ27"/>
<dbReference type="GeneID" id="298544"/>
<dbReference type="KEGG" id="rno:298544"/>
<dbReference type="UCSC" id="RGD:1308118">
    <property type="organism name" value="rat"/>
</dbReference>
<dbReference type="AGR" id="RGD:1308118"/>
<dbReference type="CTD" id="83442"/>
<dbReference type="RGD" id="1308118">
    <property type="gene designation" value="Sh3bgrl3"/>
</dbReference>
<dbReference type="VEuPathDB" id="HostDB:ENSRNOG00000015967"/>
<dbReference type="eggNOG" id="KOG4023">
    <property type="taxonomic scope" value="Eukaryota"/>
</dbReference>
<dbReference type="HOGENOM" id="CLU_084862_3_1_1"/>
<dbReference type="InParanoid" id="B2RZ27"/>
<dbReference type="OrthoDB" id="13904at9989"/>
<dbReference type="TreeFam" id="TF105574"/>
<dbReference type="PRO" id="PR:B2RZ27"/>
<dbReference type="Proteomes" id="UP000002494">
    <property type="component" value="Unplaced"/>
</dbReference>
<dbReference type="Proteomes" id="UP000234681">
    <property type="component" value="Chromosome 5"/>
</dbReference>
<dbReference type="Bgee" id="ENSRNOG00000015967">
    <property type="expression patterns" value="Expressed in spleen and 19 other cell types or tissues"/>
</dbReference>
<dbReference type="GO" id="GO:0005737">
    <property type="term" value="C:cytoplasm"/>
    <property type="evidence" value="ECO:0000318"/>
    <property type="project" value="GO_Central"/>
</dbReference>
<dbReference type="GO" id="GO:0005829">
    <property type="term" value="C:cytosol"/>
    <property type="evidence" value="ECO:0000314"/>
    <property type="project" value="UniProtKB"/>
</dbReference>
<dbReference type="GO" id="GO:0005634">
    <property type="term" value="C:nucleus"/>
    <property type="evidence" value="ECO:0007669"/>
    <property type="project" value="UniProtKB-SubCell"/>
</dbReference>
<dbReference type="GO" id="GO:0032587">
    <property type="term" value="C:ruffle membrane"/>
    <property type="evidence" value="ECO:0000266"/>
    <property type="project" value="RGD"/>
</dbReference>
<dbReference type="GO" id="GO:0007010">
    <property type="term" value="P:cytoskeleton organization"/>
    <property type="evidence" value="ECO:0000266"/>
    <property type="project" value="RGD"/>
</dbReference>
<dbReference type="CDD" id="cd03030">
    <property type="entry name" value="GRX_SH3BGR"/>
    <property type="match status" value="1"/>
</dbReference>
<dbReference type="FunFam" id="3.40.30.10:FF:000132">
    <property type="entry name" value="SH3 domain-binding glutamic acid-rich-like protein 3"/>
    <property type="match status" value="1"/>
</dbReference>
<dbReference type="Gene3D" id="3.40.30.10">
    <property type="entry name" value="Glutaredoxin"/>
    <property type="match status" value="1"/>
</dbReference>
<dbReference type="InterPro" id="IPR006993">
    <property type="entry name" value="Glut_rich_SH3-bd"/>
</dbReference>
<dbReference type="InterPro" id="IPR051033">
    <property type="entry name" value="SH3BGR"/>
</dbReference>
<dbReference type="InterPro" id="IPR036249">
    <property type="entry name" value="Thioredoxin-like_sf"/>
</dbReference>
<dbReference type="PANTHER" id="PTHR12232">
    <property type="entry name" value="SH3 DOMAIN-BINDING GLUTAMIC ACID-RICH-LIKE PROTEIN"/>
    <property type="match status" value="1"/>
</dbReference>
<dbReference type="PANTHER" id="PTHR12232:SF3">
    <property type="entry name" value="SH3 DOMAIN-BINDING GLUTAMIC ACID-RICH-LIKE PROTEIN 3"/>
    <property type="match status" value="1"/>
</dbReference>
<dbReference type="Pfam" id="PF04908">
    <property type="entry name" value="SH3BGR"/>
    <property type="match status" value="1"/>
</dbReference>
<dbReference type="SUPFAM" id="SSF52833">
    <property type="entry name" value="Thioredoxin-like"/>
    <property type="match status" value="1"/>
</dbReference>
<dbReference type="PROSITE" id="PS51354">
    <property type="entry name" value="GLUTAREDOXIN_2"/>
    <property type="match status" value="1"/>
</dbReference>
<feature type="initiator methionine" description="Removed" evidence="1">
    <location>
        <position position="1"/>
    </location>
</feature>
<feature type="chain" id="PRO_0000456718" description="SH3 domain-binding glutamic acid-rich-like protein 3">
    <location>
        <begin position="2"/>
        <end position="93"/>
    </location>
</feature>
<feature type="domain" description="Glutaredoxin" evidence="3">
    <location>
        <begin position="2"/>
        <end position="93"/>
    </location>
</feature>
<feature type="modified residue" description="N-acetylserine" evidence="1">
    <location>
        <position position="2"/>
    </location>
</feature>
<feature type="glycosylation site" description="O-linked (GalNAc...) threonine" evidence="2">
    <location>
        <position position="9"/>
    </location>
</feature>
<protein>
    <recommendedName>
        <fullName evidence="1">SH3 domain-binding glutamic acid-rich-like protein 3</fullName>
    </recommendedName>
    <alternativeName>
        <fullName evidence="5">TNF inhibitory protein B1</fullName>
        <shortName evidence="5">TIP-B1</shortName>
    </alternativeName>
</protein>
<proteinExistence type="evidence at protein level"/>
<evidence type="ECO:0000250" key="1">
    <source>
        <dbReference type="UniProtKB" id="Q9H299"/>
    </source>
</evidence>
<evidence type="ECO:0000255" key="2"/>
<evidence type="ECO:0000255" key="3">
    <source>
        <dbReference type="PROSITE-ProRule" id="PRU00686"/>
    </source>
</evidence>
<evidence type="ECO:0000269" key="4">
    <source>
    </source>
</evidence>
<evidence type="ECO:0000303" key="5">
    <source>
    </source>
</evidence>
<evidence type="ECO:0000305" key="6"/>
<evidence type="ECO:0000305" key="7">
    <source>
    </source>
</evidence>
<evidence type="ECO:0000312" key="8">
    <source>
        <dbReference type="EMBL" id="AAI67002.1"/>
    </source>
</evidence>
<evidence type="ECO:0000312" key="9">
    <source>
        <dbReference type="EMBL" id="EDL80707.1"/>
    </source>
</evidence>
<evidence type="ECO:0000312" key="10">
    <source>
        <dbReference type="RGD" id="1308118"/>
    </source>
</evidence>
<gene>
    <name evidence="10" type="primary">Sh3bgrl3</name>
    <name evidence="9" type="ORF">rCG_30780</name>
</gene>
<reference evidence="8" key="1">
    <citation type="journal article" date="2004" name="Genome Res.">
        <title>The status, quality, and expansion of the NIH full-length cDNA project: the Mammalian Gene Collection (MGC).</title>
        <authorList>
            <consortium name="The MGC Project Team"/>
        </authorList>
    </citation>
    <scope>NUCLEOTIDE SEQUENCE [LARGE SCALE MRNA]</scope>
    <source>
        <tissue evidence="8">Placenta</tissue>
    </source>
</reference>
<reference key="2">
    <citation type="submission" date="2005-07" db="EMBL/GenBank/DDBJ databases">
        <authorList>
            <person name="Mural R.J."/>
            <person name="Adams M.D."/>
            <person name="Myers E.W."/>
            <person name="Smith H.O."/>
            <person name="Venter J.C."/>
        </authorList>
    </citation>
    <scope>NUCLEOTIDE SEQUENCE [LARGE SCALE GENOMIC DNA]</scope>
    <source>
        <strain evidence="9">Brown Norway</strain>
    </source>
</reference>
<reference evidence="6" key="3">
    <citation type="journal article" date="2001" name="J. Leukoc. Biol.">
        <title>Expression, tissue distribution, and cellular localization of the antiapoptotic TIP-B1 protein.</title>
        <authorList>
            <person name="Berleth E.S."/>
            <person name="Masso-Welch P.A."/>
            <person name="Kazim L.A."/>
            <person name="Ip M.M."/>
            <person name="Mihich E."/>
            <person name="Ehrke M.J."/>
        </authorList>
    </citation>
    <scope>SUBCELLULAR LOCATION</scope>
    <scope>TISSUE SPECIFICITY</scope>
</reference>
<organism evidence="8">
    <name type="scientific">Rattus norvegicus</name>
    <name type="common">Rat</name>
    <dbReference type="NCBI Taxonomy" id="10116"/>
    <lineage>
        <taxon>Eukaryota</taxon>
        <taxon>Metazoa</taxon>
        <taxon>Chordata</taxon>
        <taxon>Craniata</taxon>
        <taxon>Vertebrata</taxon>
        <taxon>Euteleostomi</taxon>
        <taxon>Mammalia</taxon>
        <taxon>Eutheria</taxon>
        <taxon>Euarchontoglires</taxon>
        <taxon>Glires</taxon>
        <taxon>Rodentia</taxon>
        <taxon>Myomorpha</taxon>
        <taxon>Muroidea</taxon>
        <taxon>Muridae</taxon>
        <taxon>Murinae</taxon>
        <taxon>Rattus</taxon>
    </lineage>
</organism>
<accession>B2RZ27</accession>
<name>SH3L3_RAT</name>
<keyword id="KW-0007">Acetylation</keyword>
<keyword id="KW-1003">Cell membrane</keyword>
<keyword id="KW-0966">Cell projection</keyword>
<keyword id="KW-0963">Cytoplasm</keyword>
<keyword id="KW-0325">Glycoprotein</keyword>
<keyword id="KW-0472">Membrane</keyword>
<keyword id="KW-0539">Nucleus</keyword>
<keyword id="KW-1185">Reference proteome</keyword>
<sequence length="93" mass="10477">MSGLRVYSTSVTGSREIKSQQSEVTRILDGKRIQYQLVDISQDNALRDEMRTLAGNPKATPPQIVNGDHYCGDYELFVEAVEQNTLQEFLKLA</sequence>